<name>GLDH2_ORYSJ</name>
<protein>
    <recommendedName>
        <fullName>L-galactono-1,4-lactone dehydrogenase 2, mitochondrial</fullName>
        <ecNumber>1.3.2.3</ecNumber>
    </recommendedName>
</protein>
<sequence>MRRLLLAGILRRASSSPSSHHHLHLVRALSASSPLPASDADLRKYAGYALLLLGCGAATYYSFPLPPDALHKKAVPFKYAPLPDDLHAVSNWSATHEVHTRVLLQPDSLPVLHDALAAAHGERRKLRPLGSGLSPNGLALSRAGMVNLALMDKVLDVDAKKKTVTVQAGIRVAELVDTLREHGLTLQNFASIREQQVGGIIQVGAHGTGARLPPIDEQVISMKLVTPAKGTIELSREKDPDLFYLARCGLGGLGVVAEVTLQCVERHQLIEHTFVSSADEVKKNHKKWLSENKHIKYLWIPYTDTVVVVQCNPPSRWRTPKFTSKYGKDEAIQHVRDLYRESLKKYRTKAESNDPEVDQLSFTELRDRLLALDPLDKDHVIRINKAEAEYWKKSEGYRMGWSDEILGFDCGGQQWVSETCFPAGTLAKPNMKDLDYIEELLQLIEKEDIPAPAPIEQRWTACSRSPMSPASSSQEDDIFSWVGIIMYLPTSDARQRKEITEEFFNYRSKTQTNLWDGYSAYEHWAKIEVPKDKDELTELLARLRKRFPVDAYNKARMELDPNKVLSNAKLEKLFPVTEVQHVK</sequence>
<reference key="1">
    <citation type="journal article" date="2005" name="BMC Biol.">
        <title>The sequence of rice chromosomes 11 and 12, rich in disease resistance genes and recent gene duplications.</title>
        <authorList>
            <consortium name="The rice chromosomes 11 and 12 sequencing consortia"/>
        </authorList>
    </citation>
    <scope>NUCLEOTIDE SEQUENCE [LARGE SCALE GENOMIC DNA]</scope>
    <source>
        <strain>cv. Nipponbare</strain>
    </source>
</reference>
<reference key="2">
    <citation type="journal article" date="2005" name="Nature">
        <title>The map-based sequence of the rice genome.</title>
        <authorList>
            <consortium name="International rice genome sequencing project (IRGSP)"/>
        </authorList>
    </citation>
    <scope>NUCLEOTIDE SEQUENCE [LARGE SCALE GENOMIC DNA]</scope>
    <source>
        <strain>cv. Nipponbare</strain>
    </source>
</reference>
<reference key="3">
    <citation type="journal article" date="2008" name="Nucleic Acids Res.">
        <title>The rice annotation project database (RAP-DB): 2008 update.</title>
        <authorList>
            <consortium name="The rice annotation project (RAP)"/>
        </authorList>
    </citation>
    <scope>GENOME REANNOTATION</scope>
    <source>
        <strain>cv. Nipponbare</strain>
    </source>
</reference>
<reference key="4">
    <citation type="journal article" date="2013" name="Rice">
        <title>Improvement of the Oryza sativa Nipponbare reference genome using next generation sequence and optical map data.</title>
        <authorList>
            <person name="Kawahara Y."/>
            <person name="de la Bastide M."/>
            <person name="Hamilton J.P."/>
            <person name="Kanamori H."/>
            <person name="McCombie W.R."/>
            <person name="Ouyang S."/>
            <person name="Schwartz D.C."/>
            <person name="Tanaka T."/>
            <person name="Wu J."/>
            <person name="Zhou S."/>
            <person name="Childs K.L."/>
            <person name="Davidson R.M."/>
            <person name="Lin H."/>
            <person name="Quesada-Ocampo L."/>
            <person name="Vaillancourt B."/>
            <person name="Sakai H."/>
            <person name="Lee S.S."/>
            <person name="Kim J."/>
            <person name="Numa H."/>
            <person name="Itoh T."/>
            <person name="Buell C.R."/>
            <person name="Matsumoto T."/>
        </authorList>
    </citation>
    <scope>GENOME REANNOTATION</scope>
    <source>
        <strain>cv. Nipponbare</strain>
    </source>
</reference>
<reference key="5">
    <citation type="journal article" date="2005" name="PLoS Biol.">
        <title>The genomes of Oryza sativa: a history of duplications.</title>
        <authorList>
            <person name="Yu J."/>
            <person name="Wang J."/>
            <person name="Lin W."/>
            <person name="Li S."/>
            <person name="Li H."/>
            <person name="Zhou J."/>
            <person name="Ni P."/>
            <person name="Dong W."/>
            <person name="Hu S."/>
            <person name="Zeng C."/>
            <person name="Zhang J."/>
            <person name="Zhang Y."/>
            <person name="Li R."/>
            <person name="Xu Z."/>
            <person name="Li S."/>
            <person name="Li X."/>
            <person name="Zheng H."/>
            <person name="Cong L."/>
            <person name="Lin L."/>
            <person name="Yin J."/>
            <person name="Geng J."/>
            <person name="Li G."/>
            <person name="Shi J."/>
            <person name="Liu J."/>
            <person name="Lv H."/>
            <person name="Li J."/>
            <person name="Wang J."/>
            <person name="Deng Y."/>
            <person name="Ran L."/>
            <person name="Shi X."/>
            <person name="Wang X."/>
            <person name="Wu Q."/>
            <person name="Li C."/>
            <person name="Ren X."/>
            <person name="Wang J."/>
            <person name="Wang X."/>
            <person name="Li D."/>
            <person name="Liu D."/>
            <person name="Zhang X."/>
            <person name="Ji Z."/>
            <person name="Zhao W."/>
            <person name="Sun Y."/>
            <person name="Zhang Z."/>
            <person name="Bao J."/>
            <person name="Han Y."/>
            <person name="Dong L."/>
            <person name="Ji J."/>
            <person name="Chen P."/>
            <person name="Wu S."/>
            <person name="Liu J."/>
            <person name="Xiao Y."/>
            <person name="Bu D."/>
            <person name="Tan J."/>
            <person name="Yang L."/>
            <person name="Ye C."/>
            <person name="Zhang J."/>
            <person name="Xu J."/>
            <person name="Zhou Y."/>
            <person name="Yu Y."/>
            <person name="Zhang B."/>
            <person name="Zhuang S."/>
            <person name="Wei H."/>
            <person name="Liu B."/>
            <person name="Lei M."/>
            <person name="Yu H."/>
            <person name="Li Y."/>
            <person name="Xu H."/>
            <person name="Wei S."/>
            <person name="He X."/>
            <person name="Fang L."/>
            <person name="Zhang Z."/>
            <person name="Zhang Y."/>
            <person name="Huang X."/>
            <person name="Su Z."/>
            <person name="Tong W."/>
            <person name="Li J."/>
            <person name="Tong Z."/>
            <person name="Li S."/>
            <person name="Ye J."/>
            <person name="Wang L."/>
            <person name="Fang L."/>
            <person name="Lei T."/>
            <person name="Chen C.-S."/>
            <person name="Chen H.-C."/>
            <person name="Xu Z."/>
            <person name="Li H."/>
            <person name="Huang H."/>
            <person name="Zhang F."/>
            <person name="Xu H."/>
            <person name="Li N."/>
            <person name="Zhao C."/>
            <person name="Li S."/>
            <person name="Dong L."/>
            <person name="Huang Y."/>
            <person name="Li L."/>
            <person name="Xi Y."/>
            <person name="Qi Q."/>
            <person name="Li W."/>
            <person name="Zhang B."/>
            <person name="Hu W."/>
            <person name="Zhang Y."/>
            <person name="Tian X."/>
            <person name="Jiao Y."/>
            <person name="Liang X."/>
            <person name="Jin J."/>
            <person name="Gao L."/>
            <person name="Zheng W."/>
            <person name="Hao B."/>
            <person name="Liu S.-M."/>
            <person name="Wang W."/>
            <person name="Yuan L."/>
            <person name="Cao M."/>
            <person name="McDermott J."/>
            <person name="Samudrala R."/>
            <person name="Wang J."/>
            <person name="Wong G.K.-S."/>
            <person name="Yang H."/>
        </authorList>
    </citation>
    <scope>NUCLEOTIDE SEQUENCE [LARGE SCALE GENOMIC DNA]</scope>
    <source>
        <strain>cv. Nipponbare</strain>
    </source>
</reference>
<reference key="6">
    <citation type="submission" date="2006-10" db="EMBL/GenBank/DDBJ databases">
        <title>Oryza sativa full length cDNA.</title>
        <authorList>
            <consortium name="The rice full-length cDNA consortium"/>
        </authorList>
    </citation>
    <scope>NUCLEOTIDE SEQUENCE [LARGE SCALE MRNA]</scope>
    <source>
        <strain>cv. Nipponbare</strain>
    </source>
</reference>
<proteinExistence type="evidence at transcript level"/>
<gene>
    <name type="primary">GLDH2</name>
    <name type="ordered locus">Os12g0139600</name>
    <name type="ordered locus">LOC_Os12g04520</name>
    <name type="ORF">OsJ_35179</name>
</gene>
<dbReference type="EC" id="1.3.2.3"/>
<dbReference type="EMBL" id="DP000011">
    <property type="protein sequence ID" value="ABA96408.1"/>
    <property type="molecule type" value="Genomic_DNA"/>
</dbReference>
<dbReference type="EMBL" id="AP008218">
    <property type="protein sequence ID" value="BAF29139.2"/>
    <property type="status" value="ALT_SEQ"/>
    <property type="molecule type" value="Genomic_DNA"/>
</dbReference>
<dbReference type="EMBL" id="AP014968">
    <property type="protein sequence ID" value="BAT15829.1"/>
    <property type="molecule type" value="Genomic_DNA"/>
</dbReference>
<dbReference type="EMBL" id="CM000149">
    <property type="protein sequence ID" value="EAZ19601.1"/>
    <property type="molecule type" value="Genomic_DNA"/>
</dbReference>
<dbReference type="EMBL" id="AK241565">
    <property type="status" value="NOT_ANNOTATED_CDS"/>
    <property type="molecule type" value="mRNA"/>
</dbReference>
<dbReference type="RefSeq" id="XP_015619621.1">
    <property type="nucleotide sequence ID" value="XM_015764135.1"/>
</dbReference>
<dbReference type="SMR" id="Q2QXY1"/>
<dbReference type="FunCoup" id="Q2QXY1">
    <property type="interactions" value="823"/>
</dbReference>
<dbReference type="STRING" id="39947.Q2QXY1"/>
<dbReference type="PaxDb" id="39947-Q2QXY1"/>
<dbReference type="EnsemblPlants" id="Os12t0139600-01">
    <property type="protein sequence ID" value="Os12t0139600-01"/>
    <property type="gene ID" value="Os12g0139600"/>
</dbReference>
<dbReference type="Gramene" id="Os12t0139600-01">
    <property type="protein sequence ID" value="Os12t0139600-01"/>
    <property type="gene ID" value="Os12g0139600"/>
</dbReference>
<dbReference type="KEGG" id="dosa:Os12g0139600"/>
<dbReference type="eggNOG" id="KOG4730">
    <property type="taxonomic scope" value="Eukaryota"/>
</dbReference>
<dbReference type="HOGENOM" id="CLU_021072_0_0_1"/>
<dbReference type="InParanoid" id="Q2QXY1"/>
<dbReference type="OMA" id="QDDIFSW"/>
<dbReference type="OrthoDB" id="610608at2759"/>
<dbReference type="BRENDA" id="1.3.2.3">
    <property type="organism ID" value="8948"/>
</dbReference>
<dbReference type="PlantReactome" id="R-OSA-1119410">
    <property type="pathway name" value="Ascorbate biosynthesis"/>
</dbReference>
<dbReference type="UniPathway" id="UPA00132"/>
<dbReference type="Proteomes" id="UP000000763">
    <property type="component" value="Chromosome 12"/>
</dbReference>
<dbReference type="Proteomes" id="UP000007752">
    <property type="component" value="Chromosome 12"/>
</dbReference>
<dbReference type="Proteomes" id="UP000059680">
    <property type="component" value="Chromosome 12"/>
</dbReference>
<dbReference type="GO" id="GO:0031966">
    <property type="term" value="C:mitochondrial membrane"/>
    <property type="evidence" value="ECO:0007669"/>
    <property type="project" value="UniProtKB-SubCell"/>
</dbReference>
<dbReference type="GO" id="GO:0003885">
    <property type="term" value="F:D-arabinono-1,4-lactone oxidase activity"/>
    <property type="evidence" value="ECO:0007669"/>
    <property type="project" value="InterPro"/>
</dbReference>
<dbReference type="GO" id="GO:0071949">
    <property type="term" value="F:FAD binding"/>
    <property type="evidence" value="ECO:0007669"/>
    <property type="project" value="InterPro"/>
</dbReference>
<dbReference type="GO" id="GO:0016633">
    <property type="term" value="F:galactonolactone dehydrogenase activity"/>
    <property type="evidence" value="ECO:0007669"/>
    <property type="project" value="UniProtKB-EC"/>
</dbReference>
<dbReference type="GO" id="GO:0016491">
    <property type="term" value="F:oxidoreductase activity"/>
    <property type="evidence" value="ECO:0000318"/>
    <property type="project" value="GO_Central"/>
</dbReference>
<dbReference type="GO" id="GO:0019853">
    <property type="term" value="P:L-ascorbic acid biosynthetic process"/>
    <property type="evidence" value="ECO:0007669"/>
    <property type="project" value="UniProtKB-UniPathway"/>
</dbReference>
<dbReference type="Gene3D" id="3.30.465.10">
    <property type="match status" value="1"/>
</dbReference>
<dbReference type="Gene3D" id="3.30.43.10">
    <property type="entry name" value="Uridine Diphospho-n-acetylenolpyruvylglucosamine Reductase, domain 2"/>
    <property type="match status" value="1"/>
</dbReference>
<dbReference type="InterPro" id="IPR007173">
    <property type="entry name" value="ALO_C"/>
</dbReference>
<dbReference type="InterPro" id="IPR016166">
    <property type="entry name" value="FAD-bd_PCMH"/>
</dbReference>
<dbReference type="InterPro" id="IPR036318">
    <property type="entry name" value="FAD-bd_PCMH-like_sf"/>
</dbReference>
<dbReference type="InterPro" id="IPR016167">
    <property type="entry name" value="FAD-bd_PCMH_sub1"/>
</dbReference>
<dbReference type="InterPro" id="IPR016169">
    <property type="entry name" value="FAD-bd_PCMH_sub2"/>
</dbReference>
<dbReference type="InterPro" id="IPR010031">
    <property type="entry name" value="FAD_lactone_oxidase-like"/>
</dbReference>
<dbReference type="InterPro" id="IPR010029">
    <property type="entry name" value="GL_DH"/>
</dbReference>
<dbReference type="InterPro" id="IPR006094">
    <property type="entry name" value="Oxid_FAD_bind_N"/>
</dbReference>
<dbReference type="NCBIfam" id="TIGR01676">
    <property type="entry name" value="GLDHase"/>
    <property type="match status" value="1"/>
</dbReference>
<dbReference type="PANTHER" id="PTHR43762:SF1">
    <property type="entry name" value="D-ARABINONO-1,4-LACTONE OXIDASE"/>
    <property type="match status" value="1"/>
</dbReference>
<dbReference type="PANTHER" id="PTHR43762">
    <property type="entry name" value="L-GULONOLACTONE OXIDASE"/>
    <property type="match status" value="1"/>
</dbReference>
<dbReference type="Pfam" id="PF04030">
    <property type="entry name" value="ALO"/>
    <property type="match status" value="1"/>
</dbReference>
<dbReference type="Pfam" id="PF01565">
    <property type="entry name" value="FAD_binding_4"/>
    <property type="match status" value="1"/>
</dbReference>
<dbReference type="PIRSF" id="PIRSF000136">
    <property type="entry name" value="LGO_GLO"/>
    <property type="match status" value="1"/>
</dbReference>
<dbReference type="SUPFAM" id="SSF56176">
    <property type="entry name" value="FAD-binding/transporter-associated domain-like"/>
    <property type="match status" value="1"/>
</dbReference>
<dbReference type="PROSITE" id="PS51387">
    <property type="entry name" value="FAD_PCMH"/>
    <property type="match status" value="1"/>
</dbReference>
<comment type="function">
    <text evidence="1">Involved in the biosynthesis of ascorbic acid.</text>
</comment>
<comment type="catalytic activity">
    <reaction>
        <text>L-galactono-1,4-lactone + 4 Fe(III)-[cytochrome c] = L-dehydroascorbate + 4 Fe(II)-[cytochrome c] + 5 H(+)</text>
        <dbReference type="Rhea" id="RHEA:32367"/>
        <dbReference type="Rhea" id="RHEA-COMP:10350"/>
        <dbReference type="Rhea" id="RHEA-COMP:14399"/>
        <dbReference type="ChEBI" id="CHEBI:15378"/>
        <dbReference type="ChEBI" id="CHEBI:17464"/>
        <dbReference type="ChEBI" id="CHEBI:29033"/>
        <dbReference type="ChEBI" id="CHEBI:29034"/>
        <dbReference type="ChEBI" id="CHEBI:58539"/>
        <dbReference type="EC" id="1.3.2.3"/>
    </reaction>
</comment>
<comment type="cofactor">
    <cofactor evidence="4">
        <name>FAD</name>
        <dbReference type="ChEBI" id="CHEBI:57692"/>
    </cofactor>
</comment>
<comment type="pathway">
    <text>Cofactor biosynthesis; L-ascorbate biosynthesis.</text>
</comment>
<comment type="subcellular location">
    <subcellularLocation>
        <location evidence="4">Mitochondrion membrane</location>
        <topology evidence="4">Single-pass membrane protein</topology>
    </subcellularLocation>
</comment>
<comment type="sequence caution" evidence="4">
    <conflict type="erroneous gene model prediction">
        <sequence resource="EMBL-CDS" id="BAF29139"/>
    </conflict>
</comment>
<accession>Q2QXY1</accession>
<accession>A0A0P0Y6V7</accession>
<feature type="transit peptide" description="Mitochondrion" evidence="2">
    <location>
        <begin position="1"/>
        <end position="36"/>
    </location>
</feature>
<feature type="propeptide" id="PRO_0000372087" description="Removed in mature form" evidence="1">
    <location>
        <begin position="37"/>
        <end position="78"/>
    </location>
</feature>
<feature type="chain" id="PRO_0000372088" description="L-galactono-1,4-lactone dehydrogenase 2, mitochondrial">
    <location>
        <begin position="79"/>
        <end position="583"/>
    </location>
</feature>
<feature type="transmembrane region" description="Helical" evidence="2">
    <location>
        <begin position="45"/>
        <end position="61"/>
    </location>
</feature>
<feature type="domain" description="FAD-binding PCMH-type" evidence="3">
    <location>
        <begin position="95"/>
        <end position="266"/>
    </location>
</feature>
<feature type="sequence conflict" description="In Ref. 6; AK241565." evidence="4" ref="6">
    <original>R</original>
    <variation>Q</variation>
    <location>
        <position position="193"/>
    </location>
</feature>
<keyword id="KW-0472">Membrane</keyword>
<keyword id="KW-0496">Mitochondrion</keyword>
<keyword id="KW-0560">Oxidoreductase</keyword>
<keyword id="KW-1185">Reference proteome</keyword>
<keyword id="KW-0809">Transit peptide</keyword>
<keyword id="KW-0812">Transmembrane</keyword>
<keyword id="KW-1133">Transmembrane helix</keyword>
<evidence type="ECO:0000250" key="1"/>
<evidence type="ECO:0000255" key="2"/>
<evidence type="ECO:0000255" key="3">
    <source>
        <dbReference type="PROSITE-ProRule" id="PRU00718"/>
    </source>
</evidence>
<evidence type="ECO:0000305" key="4"/>
<organism>
    <name type="scientific">Oryza sativa subsp. japonica</name>
    <name type="common">Rice</name>
    <dbReference type="NCBI Taxonomy" id="39947"/>
    <lineage>
        <taxon>Eukaryota</taxon>
        <taxon>Viridiplantae</taxon>
        <taxon>Streptophyta</taxon>
        <taxon>Embryophyta</taxon>
        <taxon>Tracheophyta</taxon>
        <taxon>Spermatophyta</taxon>
        <taxon>Magnoliopsida</taxon>
        <taxon>Liliopsida</taxon>
        <taxon>Poales</taxon>
        <taxon>Poaceae</taxon>
        <taxon>BOP clade</taxon>
        <taxon>Oryzoideae</taxon>
        <taxon>Oryzeae</taxon>
        <taxon>Oryzinae</taxon>
        <taxon>Oryza</taxon>
        <taxon>Oryza sativa</taxon>
    </lineage>
</organism>